<sequence length="580" mass="65341">MSTNGGAPSQKRSWLPSRPLLTTTTQTYPPPLLPFKKLHAPPTAARRSLPPAASKPMASSSSSSLPAAWAAAVRAWAVAPALRAAVWACLAMSAMLVAEAAWMGLASLAAAAARRLRGYGYRWEPMAAPPDVEAPAPAPAEFPMVLVQIPMYNEKEVYKLSIGAACALTWPPDRIIIQVLDDSTDPFVKELVELECKEWASKKINIKYEVRNNRKGYKAGALRKGMEHTYAQLCDFVAIFDADFEPESDFLLKTMPYLLHNPKIALVQTRWEFVNYNVCLMTRIQKMSLDYHFKVEQESGSFMHAFFGFNGTAGVWRVSAINQSGGWKDRTTVEDMDLAVRASLKGWEFLYVGDIRVKSELPSTFQAYRHQQHRWTCGAANLFRKMAWEIITNKEVSMWKKYHLLYSFFFVRRAIAPILTFLFYCIVIPLSAMVPEVTIPVWGLVYIPTAITIMNAIRNPGSVHLMPFWILFENVMAMHRMRAALSGLLETARANDWVVTEKVGDQVKDELDVPLLEPLKPTECAERIYIPELLLALYLLICASYDFVLGNHKYYIYIYLQAVAFTVMGFGFVGTRTPCS</sequence>
<reference key="1">
    <citation type="journal article" date="2003" name="Science">
        <title>In-depth view of structure, activity, and evolution of rice chromosome 10.</title>
        <authorList>
            <person name="Yu Y."/>
            <person name="Rambo T."/>
            <person name="Currie J."/>
            <person name="Saski C."/>
            <person name="Kim H.-R."/>
            <person name="Collura K."/>
            <person name="Thompson S."/>
            <person name="Simmons J."/>
            <person name="Yang T.-J."/>
            <person name="Nah G."/>
            <person name="Patel A.J."/>
            <person name="Thurmond S."/>
            <person name="Henry D."/>
            <person name="Oates R."/>
            <person name="Palmer M."/>
            <person name="Pries G."/>
            <person name="Gibson J."/>
            <person name="Anderson H."/>
            <person name="Paradkar M."/>
            <person name="Crane L."/>
            <person name="Dale J."/>
            <person name="Carver M.B."/>
            <person name="Wood T."/>
            <person name="Frisch D."/>
            <person name="Engler F."/>
            <person name="Soderlund C."/>
            <person name="Palmer L.E."/>
            <person name="Teytelman L."/>
            <person name="Nascimento L."/>
            <person name="De la Bastide M."/>
            <person name="Spiegel L."/>
            <person name="Ware D."/>
            <person name="O'Shaughnessy A."/>
            <person name="Dike S."/>
            <person name="Dedhia N."/>
            <person name="Preston R."/>
            <person name="Huang E."/>
            <person name="Ferraro K."/>
            <person name="Kuit K."/>
            <person name="Miller B."/>
            <person name="Zutavern T."/>
            <person name="Katzenberger F."/>
            <person name="Muller S."/>
            <person name="Balija V."/>
            <person name="Martienssen R.A."/>
            <person name="Stein L."/>
            <person name="Minx P."/>
            <person name="Johnson D."/>
            <person name="Cordum H."/>
            <person name="Mardis E."/>
            <person name="Cheng Z."/>
            <person name="Jiang J."/>
            <person name="Wilson R."/>
            <person name="McCombie W.R."/>
            <person name="Wing R.A."/>
            <person name="Yuan Q."/>
            <person name="Ouyang S."/>
            <person name="Liu J."/>
            <person name="Jones K.M."/>
            <person name="Gansberger K."/>
            <person name="Moffat K."/>
            <person name="Hill J."/>
            <person name="Tsitrin T."/>
            <person name="Overton L."/>
            <person name="Bera J."/>
            <person name="Kim M."/>
            <person name="Jin S."/>
            <person name="Tallon L."/>
            <person name="Ciecko A."/>
            <person name="Pai G."/>
            <person name="Van Aken S."/>
            <person name="Utterback T."/>
            <person name="Reidmuller S."/>
            <person name="Bormann J."/>
            <person name="Feldblyum T."/>
            <person name="Hsiao J."/>
            <person name="Zismann V."/>
            <person name="Blunt S."/>
            <person name="de Vazeille A.R."/>
            <person name="Shaffer T."/>
            <person name="Koo H."/>
            <person name="Suh B."/>
            <person name="Yang Q."/>
            <person name="Haas B."/>
            <person name="Peterson J."/>
            <person name="Pertea M."/>
            <person name="Volfovsky N."/>
            <person name="Wortman J."/>
            <person name="White O."/>
            <person name="Salzberg S.L."/>
            <person name="Fraser C.M."/>
            <person name="Buell C.R."/>
            <person name="Messing J."/>
            <person name="Song R."/>
            <person name="Fuks G."/>
            <person name="Llaca V."/>
            <person name="Kovchak S."/>
            <person name="Young S."/>
            <person name="Bowers J.E."/>
            <person name="Paterson A.H."/>
            <person name="Johns M.A."/>
            <person name="Mao L."/>
            <person name="Pan H."/>
            <person name="Dean R.A."/>
        </authorList>
    </citation>
    <scope>NUCLEOTIDE SEQUENCE [LARGE SCALE GENOMIC DNA]</scope>
    <source>
        <strain>cv. Nipponbare</strain>
    </source>
</reference>
<reference key="2">
    <citation type="journal article" date="2005" name="Nature">
        <title>The map-based sequence of the rice genome.</title>
        <authorList>
            <consortium name="International rice genome sequencing project (IRGSP)"/>
        </authorList>
    </citation>
    <scope>NUCLEOTIDE SEQUENCE [LARGE SCALE GENOMIC DNA]</scope>
    <source>
        <strain>cv. Nipponbare</strain>
    </source>
</reference>
<reference key="3">
    <citation type="journal article" date="2008" name="Nucleic Acids Res.">
        <title>The rice annotation project database (RAP-DB): 2008 update.</title>
        <authorList>
            <consortium name="The rice annotation project (RAP)"/>
        </authorList>
    </citation>
    <scope>GENOME REANNOTATION</scope>
    <source>
        <strain>cv. Nipponbare</strain>
    </source>
</reference>
<reference key="4">
    <citation type="journal article" date="2013" name="Rice">
        <title>Improvement of the Oryza sativa Nipponbare reference genome using next generation sequence and optical map data.</title>
        <authorList>
            <person name="Kawahara Y."/>
            <person name="de la Bastide M."/>
            <person name="Hamilton J.P."/>
            <person name="Kanamori H."/>
            <person name="McCombie W.R."/>
            <person name="Ouyang S."/>
            <person name="Schwartz D.C."/>
            <person name="Tanaka T."/>
            <person name="Wu J."/>
            <person name="Zhou S."/>
            <person name="Childs K.L."/>
            <person name="Davidson R.M."/>
            <person name="Lin H."/>
            <person name="Quesada-Ocampo L."/>
            <person name="Vaillancourt B."/>
            <person name="Sakai H."/>
            <person name="Lee S.S."/>
            <person name="Kim J."/>
            <person name="Numa H."/>
            <person name="Itoh T."/>
            <person name="Buell C.R."/>
            <person name="Matsumoto T."/>
        </authorList>
    </citation>
    <scope>GENOME REANNOTATION</scope>
    <source>
        <strain>cv. Nipponbare</strain>
    </source>
</reference>
<reference key="5">
    <citation type="journal article" date="2002" name="Plant Physiol.">
        <title>Cellulose synthase-like genes of rice.</title>
        <authorList>
            <person name="Hazen S.P."/>
            <person name="Scott-Craig J.S."/>
            <person name="Walton J.D."/>
        </authorList>
    </citation>
    <scope>NUCLEOTIDE SEQUENCE [MRNA] OF 317-580</scope>
    <scope>IDENTIFICATION</scope>
    <scope>GENE FAMILY</scope>
    <scope>NOMENCLATURE</scope>
</reference>
<comment type="function">
    <text evidence="1">Probable mannan synthase which consists of a 4-beta-mannosyltransferase activity on mannan using GDP-mannose. The beta-1,4-mannan product is the backbone for galactomannan synthesis by galactomannan galactosyltransferase. Galactomannan is a noncellulosic polysaccharides of plant cell wall.</text>
</comment>
<comment type="catalytic activity">
    <reaction evidence="1">
        <text>GDP-mannose + (glucomannan)n = GDP + (glucomannan)n+1.</text>
        <dbReference type="EC" id="2.4.1.32"/>
    </reaction>
</comment>
<comment type="subcellular location">
    <subcellularLocation>
        <location evidence="5">Golgi apparatus membrane</location>
        <topology evidence="5">Multi-pass membrane protein</topology>
    </subcellularLocation>
</comment>
<comment type="similarity">
    <text evidence="5">Belongs to the glycosyltransferase 2 family. Plant cellulose synthase-like A subfamily.</text>
</comment>
<comment type="sequence caution" evidence="5">
    <conflict type="erroneous gene model prediction">
        <sequence resource="EMBL-CDS" id="AAK98678"/>
    </conflict>
</comment>
<comment type="sequence caution" evidence="5">
    <conflict type="erroneous gene model prediction">
        <sequence resource="EMBL-CDS" id="AAP53691"/>
    </conflict>
</comment>
<comment type="sequence caution" evidence="5">
    <conflict type="erroneous gene model prediction">
        <sequence resource="EMBL-CDS" id="BAF26478"/>
    </conflict>
</comment>
<protein>
    <recommendedName>
        <fullName evidence="5">Probable glucomannan 4-beta-mannosyltransferase 2</fullName>
        <ecNumber evidence="1">2.4.1.32</ecNumber>
    </recommendedName>
    <alternativeName>
        <fullName evidence="4">Cellulose synthase-like protein A2</fullName>
        <shortName evidence="4">OsCslA2</shortName>
    </alternativeName>
    <alternativeName>
        <fullName evidence="5">Glucomannan synthase</fullName>
    </alternativeName>
    <alternativeName>
        <fullName evidence="5">Mannan synthase 2</fullName>
    </alternativeName>
</protein>
<dbReference type="EC" id="2.4.1.32" evidence="1"/>
<dbReference type="EMBL" id="AC021893">
    <property type="protein sequence ID" value="AAK98678.1"/>
    <property type="status" value="ALT_SEQ"/>
    <property type="molecule type" value="Genomic_DNA"/>
</dbReference>
<dbReference type="EMBL" id="DP000086">
    <property type="protein sequence ID" value="AAP53691.1"/>
    <property type="status" value="ALT_SEQ"/>
    <property type="molecule type" value="Genomic_DNA"/>
</dbReference>
<dbReference type="EMBL" id="AP008216">
    <property type="protein sequence ID" value="BAF26478.1"/>
    <property type="status" value="ALT_SEQ"/>
    <property type="molecule type" value="Genomic_DNA"/>
</dbReference>
<dbReference type="EMBL" id="AP014966">
    <property type="status" value="NOT_ANNOTATED_CDS"/>
    <property type="molecule type" value="Genomic_DNA"/>
</dbReference>
<dbReference type="EMBL" id="AF435640">
    <property type="protein sequence ID" value="AAL38525.1"/>
    <property type="molecule type" value="mRNA"/>
</dbReference>
<dbReference type="EMBL" id="BK000092">
    <property type="protein sequence ID" value="DAA01755.1"/>
    <property type="molecule type" value="Genomic_DNA"/>
</dbReference>
<dbReference type="SMR" id="Q7PC67"/>
<dbReference type="FunCoup" id="Q7PC67">
    <property type="interactions" value="16"/>
</dbReference>
<dbReference type="STRING" id="39947.Q7PC67"/>
<dbReference type="CAZy" id="GT2">
    <property type="family name" value="Glycosyltransferase Family 2"/>
</dbReference>
<dbReference type="PaxDb" id="39947-Q7PC67"/>
<dbReference type="GeneID" id="4348586"/>
<dbReference type="KEGG" id="dosa:Os10g0406400"/>
<dbReference type="KEGG" id="osa:4348586"/>
<dbReference type="eggNOG" id="ENOG502SHF0">
    <property type="taxonomic scope" value="Eukaryota"/>
</dbReference>
<dbReference type="InParanoid" id="Q7PC67"/>
<dbReference type="OrthoDB" id="72851at2759"/>
<dbReference type="Proteomes" id="UP000000763">
    <property type="component" value="Chromosome 10"/>
</dbReference>
<dbReference type="Proteomes" id="UP000059680">
    <property type="component" value="Chromosome 10"/>
</dbReference>
<dbReference type="GO" id="GO:0005794">
    <property type="term" value="C:Golgi apparatus"/>
    <property type="evidence" value="ECO:0000318"/>
    <property type="project" value="GO_Central"/>
</dbReference>
<dbReference type="GO" id="GO:0000139">
    <property type="term" value="C:Golgi membrane"/>
    <property type="evidence" value="ECO:0007669"/>
    <property type="project" value="UniProtKB-SubCell"/>
</dbReference>
<dbReference type="GO" id="GO:0047259">
    <property type="term" value="F:glucomannan 4-beta-mannosyltransferase activity"/>
    <property type="evidence" value="ECO:0007669"/>
    <property type="project" value="UniProtKB-EC"/>
</dbReference>
<dbReference type="GO" id="GO:0051753">
    <property type="term" value="F:mannan synthase activity"/>
    <property type="evidence" value="ECO:0000318"/>
    <property type="project" value="GO_Central"/>
</dbReference>
<dbReference type="GO" id="GO:0071555">
    <property type="term" value="P:cell wall organization"/>
    <property type="evidence" value="ECO:0007669"/>
    <property type="project" value="UniProtKB-KW"/>
</dbReference>
<dbReference type="FunFam" id="3.90.550.10:FF:000015">
    <property type="entry name" value="Glucomannan 4-beta-mannosyltransferase 9"/>
    <property type="match status" value="1"/>
</dbReference>
<dbReference type="Gene3D" id="3.90.550.10">
    <property type="entry name" value="Spore Coat Polysaccharide Biosynthesis Protein SpsA, Chain A"/>
    <property type="match status" value="1"/>
</dbReference>
<dbReference type="InterPro" id="IPR001173">
    <property type="entry name" value="Glyco_trans_2-like"/>
</dbReference>
<dbReference type="InterPro" id="IPR029044">
    <property type="entry name" value="Nucleotide-diphossugar_trans"/>
</dbReference>
<dbReference type="PANTHER" id="PTHR32044:SF79">
    <property type="entry name" value="GLUCOMANNAN 4-BETA-MANNOSYLTRANSFERASE 2-RELATED"/>
    <property type="match status" value="1"/>
</dbReference>
<dbReference type="PANTHER" id="PTHR32044">
    <property type="entry name" value="GLUCOMANNAN 4-BETA-MANNOSYLTRANSFERASE 9"/>
    <property type="match status" value="1"/>
</dbReference>
<dbReference type="Pfam" id="PF13632">
    <property type="entry name" value="Glyco_trans_2_3"/>
    <property type="match status" value="1"/>
</dbReference>
<dbReference type="SUPFAM" id="SSF53448">
    <property type="entry name" value="Nucleotide-diphospho-sugar transferases"/>
    <property type="match status" value="1"/>
</dbReference>
<gene>
    <name evidence="4" type="primary">CSLA2</name>
    <name type="ordered locus">Os10g0406400</name>
    <name type="ordered locus">LOC_Os10g26630</name>
    <name type="ORF">OSJNBa0060A14.12</name>
</gene>
<evidence type="ECO:0000250" key="1">
    <source>
        <dbReference type="UniProtKB" id="Q7PC76"/>
    </source>
</evidence>
<evidence type="ECO:0000255" key="2"/>
<evidence type="ECO:0000256" key="3">
    <source>
        <dbReference type="SAM" id="MobiDB-lite"/>
    </source>
</evidence>
<evidence type="ECO:0000303" key="4">
    <source>
    </source>
</evidence>
<evidence type="ECO:0000305" key="5"/>
<name>CSLA2_ORYSJ</name>
<feature type="chain" id="PRO_0000319373" description="Probable glucomannan 4-beta-mannosyltransferase 2">
    <location>
        <begin position="1"/>
        <end position="580"/>
    </location>
</feature>
<feature type="transmembrane region" description="Helical" evidence="2">
    <location>
        <begin position="85"/>
        <end position="105"/>
    </location>
</feature>
<feature type="transmembrane region" description="Helical" evidence="2">
    <location>
        <begin position="414"/>
        <end position="434"/>
    </location>
</feature>
<feature type="transmembrane region" description="Helical" evidence="2">
    <location>
        <begin position="437"/>
        <end position="457"/>
    </location>
</feature>
<feature type="transmembrane region" description="Helical" evidence="2">
    <location>
        <begin position="528"/>
        <end position="548"/>
    </location>
</feature>
<feature type="transmembrane region" description="Helical" evidence="2">
    <location>
        <begin position="554"/>
        <end position="574"/>
    </location>
</feature>
<feature type="region of interest" description="Disordered" evidence="3">
    <location>
        <begin position="1"/>
        <end position="33"/>
    </location>
</feature>
<feature type="compositionally biased region" description="Polar residues" evidence="3">
    <location>
        <begin position="1"/>
        <end position="12"/>
    </location>
</feature>
<feature type="compositionally biased region" description="Low complexity" evidence="3">
    <location>
        <begin position="15"/>
        <end position="27"/>
    </location>
</feature>
<feature type="active site" evidence="2">
    <location>
        <position position="182"/>
    </location>
</feature>
<feature type="active site" evidence="2">
    <location>
        <position position="335"/>
    </location>
</feature>
<feature type="binding site" evidence="2">
    <location>
        <position position="241"/>
    </location>
    <ligand>
        <name>substrate</name>
    </ligand>
</feature>
<feature type="binding site" evidence="2">
    <location>
        <position position="243"/>
    </location>
    <ligand>
        <name>substrate</name>
    </ligand>
</feature>
<organism>
    <name type="scientific">Oryza sativa subsp. japonica</name>
    <name type="common">Rice</name>
    <dbReference type="NCBI Taxonomy" id="39947"/>
    <lineage>
        <taxon>Eukaryota</taxon>
        <taxon>Viridiplantae</taxon>
        <taxon>Streptophyta</taxon>
        <taxon>Embryophyta</taxon>
        <taxon>Tracheophyta</taxon>
        <taxon>Spermatophyta</taxon>
        <taxon>Magnoliopsida</taxon>
        <taxon>Liliopsida</taxon>
        <taxon>Poales</taxon>
        <taxon>Poaceae</taxon>
        <taxon>BOP clade</taxon>
        <taxon>Oryzoideae</taxon>
        <taxon>Oryzeae</taxon>
        <taxon>Oryzinae</taxon>
        <taxon>Oryza</taxon>
        <taxon>Oryza sativa</taxon>
    </lineage>
</organism>
<accession>Q7PC67</accession>
<accession>Q0IXV9</accession>
<accession>Q7XEU7</accession>
<accession>Q8W1N9</accession>
<accession>Q948I4</accession>
<keyword id="KW-0961">Cell wall biogenesis/degradation</keyword>
<keyword id="KW-0328">Glycosyltransferase</keyword>
<keyword id="KW-0333">Golgi apparatus</keyword>
<keyword id="KW-0472">Membrane</keyword>
<keyword id="KW-1185">Reference proteome</keyword>
<keyword id="KW-0808">Transferase</keyword>
<keyword id="KW-0812">Transmembrane</keyword>
<keyword id="KW-1133">Transmembrane helix</keyword>
<proteinExistence type="evidence at transcript level"/>